<feature type="chain" id="PRO_1000012275" description="Lipoyl synthase">
    <location>
        <begin position="1"/>
        <end position="321"/>
    </location>
</feature>
<feature type="domain" description="Radical SAM core" evidence="2">
    <location>
        <begin position="80"/>
        <end position="297"/>
    </location>
</feature>
<feature type="binding site" evidence="1">
    <location>
        <position position="68"/>
    </location>
    <ligand>
        <name>[4Fe-4S] cluster</name>
        <dbReference type="ChEBI" id="CHEBI:49883"/>
        <label>1</label>
    </ligand>
</feature>
<feature type="binding site" evidence="1">
    <location>
        <position position="73"/>
    </location>
    <ligand>
        <name>[4Fe-4S] cluster</name>
        <dbReference type="ChEBI" id="CHEBI:49883"/>
        <label>1</label>
    </ligand>
</feature>
<feature type="binding site" evidence="1">
    <location>
        <position position="79"/>
    </location>
    <ligand>
        <name>[4Fe-4S] cluster</name>
        <dbReference type="ChEBI" id="CHEBI:49883"/>
        <label>1</label>
    </ligand>
</feature>
<feature type="binding site" evidence="1">
    <location>
        <position position="94"/>
    </location>
    <ligand>
        <name>[4Fe-4S] cluster</name>
        <dbReference type="ChEBI" id="CHEBI:49883"/>
        <label>2</label>
        <note>4Fe-4S-S-AdoMet</note>
    </ligand>
</feature>
<feature type="binding site" evidence="1">
    <location>
        <position position="98"/>
    </location>
    <ligand>
        <name>[4Fe-4S] cluster</name>
        <dbReference type="ChEBI" id="CHEBI:49883"/>
        <label>2</label>
        <note>4Fe-4S-S-AdoMet</note>
    </ligand>
</feature>
<feature type="binding site" evidence="1">
    <location>
        <position position="101"/>
    </location>
    <ligand>
        <name>[4Fe-4S] cluster</name>
        <dbReference type="ChEBI" id="CHEBI:49883"/>
        <label>2</label>
        <note>4Fe-4S-S-AdoMet</note>
    </ligand>
</feature>
<feature type="binding site" evidence="1">
    <location>
        <position position="308"/>
    </location>
    <ligand>
        <name>[4Fe-4S] cluster</name>
        <dbReference type="ChEBI" id="CHEBI:49883"/>
        <label>1</label>
    </ligand>
</feature>
<dbReference type="EC" id="2.8.1.8" evidence="1"/>
<dbReference type="EMBL" id="CP000447">
    <property type="protein sequence ID" value="ABI70550.1"/>
    <property type="molecule type" value="Genomic_DNA"/>
</dbReference>
<dbReference type="RefSeq" id="WP_011636175.1">
    <property type="nucleotide sequence ID" value="NC_008345.1"/>
</dbReference>
<dbReference type="SMR" id="Q087L5"/>
<dbReference type="STRING" id="318167.Sfri_0692"/>
<dbReference type="KEGG" id="sfr:Sfri_0692"/>
<dbReference type="eggNOG" id="COG0320">
    <property type="taxonomic scope" value="Bacteria"/>
</dbReference>
<dbReference type="HOGENOM" id="CLU_033144_2_1_6"/>
<dbReference type="OrthoDB" id="9787898at2"/>
<dbReference type="UniPathway" id="UPA00538">
    <property type="reaction ID" value="UER00593"/>
</dbReference>
<dbReference type="Proteomes" id="UP000000684">
    <property type="component" value="Chromosome"/>
</dbReference>
<dbReference type="GO" id="GO:0005737">
    <property type="term" value="C:cytoplasm"/>
    <property type="evidence" value="ECO:0007669"/>
    <property type="project" value="UniProtKB-SubCell"/>
</dbReference>
<dbReference type="GO" id="GO:0051539">
    <property type="term" value="F:4 iron, 4 sulfur cluster binding"/>
    <property type="evidence" value="ECO:0007669"/>
    <property type="project" value="UniProtKB-UniRule"/>
</dbReference>
<dbReference type="GO" id="GO:0016992">
    <property type="term" value="F:lipoate synthase activity"/>
    <property type="evidence" value="ECO:0007669"/>
    <property type="project" value="UniProtKB-UniRule"/>
</dbReference>
<dbReference type="GO" id="GO:0046872">
    <property type="term" value="F:metal ion binding"/>
    <property type="evidence" value="ECO:0007669"/>
    <property type="project" value="UniProtKB-KW"/>
</dbReference>
<dbReference type="CDD" id="cd01335">
    <property type="entry name" value="Radical_SAM"/>
    <property type="match status" value="1"/>
</dbReference>
<dbReference type="FunFam" id="3.20.20.70:FF:000023">
    <property type="entry name" value="Lipoyl synthase"/>
    <property type="match status" value="1"/>
</dbReference>
<dbReference type="Gene3D" id="3.20.20.70">
    <property type="entry name" value="Aldolase class I"/>
    <property type="match status" value="1"/>
</dbReference>
<dbReference type="HAMAP" id="MF_00206">
    <property type="entry name" value="Lipoyl_synth"/>
    <property type="match status" value="1"/>
</dbReference>
<dbReference type="InterPro" id="IPR013785">
    <property type="entry name" value="Aldolase_TIM"/>
</dbReference>
<dbReference type="InterPro" id="IPR006638">
    <property type="entry name" value="Elp3/MiaA/NifB-like_rSAM"/>
</dbReference>
<dbReference type="InterPro" id="IPR003698">
    <property type="entry name" value="Lipoyl_synth"/>
</dbReference>
<dbReference type="InterPro" id="IPR007197">
    <property type="entry name" value="rSAM"/>
</dbReference>
<dbReference type="NCBIfam" id="TIGR00510">
    <property type="entry name" value="lipA"/>
    <property type="match status" value="1"/>
</dbReference>
<dbReference type="NCBIfam" id="NF004019">
    <property type="entry name" value="PRK05481.1"/>
    <property type="match status" value="1"/>
</dbReference>
<dbReference type="NCBIfam" id="NF009544">
    <property type="entry name" value="PRK12928.1"/>
    <property type="match status" value="1"/>
</dbReference>
<dbReference type="PANTHER" id="PTHR10949">
    <property type="entry name" value="LIPOYL SYNTHASE"/>
    <property type="match status" value="1"/>
</dbReference>
<dbReference type="PANTHER" id="PTHR10949:SF0">
    <property type="entry name" value="LIPOYL SYNTHASE, MITOCHONDRIAL"/>
    <property type="match status" value="1"/>
</dbReference>
<dbReference type="Pfam" id="PF04055">
    <property type="entry name" value="Radical_SAM"/>
    <property type="match status" value="1"/>
</dbReference>
<dbReference type="PIRSF" id="PIRSF005963">
    <property type="entry name" value="Lipoyl_synth"/>
    <property type="match status" value="1"/>
</dbReference>
<dbReference type="SFLD" id="SFLDF00271">
    <property type="entry name" value="lipoyl_synthase"/>
    <property type="match status" value="1"/>
</dbReference>
<dbReference type="SFLD" id="SFLDS00029">
    <property type="entry name" value="Radical_SAM"/>
    <property type="match status" value="1"/>
</dbReference>
<dbReference type="SMART" id="SM00729">
    <property type="entry name" value="Elp3"/>
    <property type="match status" value="1"/>
</dbReference>
<dbReference type="SUPFAM" id="SSF102114">
    <property type="entry name" value="Radical SAM enzymes"/>
    <property type="match status" value="1"/>
</dbReference>
<dbReference type="PROSITE" id="PS51918">
    <property type="entry name" value="RADICAL_SAM"/>
    <property type="match status" value="1"/>
</dbReference>
<proteinExistence type="inferred from homology"/>
<protein>
    <recommendedName>
        <fullName evidence="1">Lipoyl synthase</fullName>
        <ecNumber evidence="1">2.8.1.8</ecNumber>
    </recommendedName>
    <alternativeName>
        <fullName evidence="1">Lip-syn</fullName>
        <shortName evidence="1">LS</shortName>
    </alternativeName>
    <alternativeName>
        <fullName evidence="1">Lipoate synthase</fullName>
    </alternativeName>
    <alternativeName>
        <fullName evidence="1">Lipoic acid synthase</fullName>
    </alternativeName>
    <alternativeName>
        <fullName evidence="1">Sulfur insertion protein LipA</fullName>
    </alternativeName>
</protein>
<reference key="1">
    <citation type="submission" date="2006-08" db="EMBL/GenBank/DDBJ databases">
        <title>Complete sequence of Shewanella frigidimarina NCIMB 400.</title>
        <authorList>
            <consortium name="US DOE Joint Genome Institute"/>
            <person name="Copeland A."/>
            <person name="Lucas S."/>
            <person name="Lapidus A."/>
            <person name="Barry K."/>
            <person name="Detter J.C."/>
            <person name="Glavina del Rio T."/>
            <person name="Hammon N."/>
            <person name="Israni S."/>
            <person name="Dalin E."/>
            <person name="Tice H."/>
            <person name="Pitluck S."/>
            <person name="Fredrickson J.K."/>
            <person name="Kolker E."/>
            <person name="McCuel L.A."/>
            <person name="DiChristina T."/>
            <person name="Nealson K.H."/>
            <person name="Newman D."/>
            <person name="Tiedje J.M."/>
            <person name="Zhou J."/>
            <person name="Romine M.F."/>
            <person name="Culley D.E."/>
            <person name="Serres M."/>
            <person name="Chertkov O."/>
            <person name="Brettin T."/>
            <person name="Bruce D."/>
            <person name="Han C."/>
            <person name="Tapia R."/>
            <person name="Gilna P."/>
            <person name="Schmutz J."/>
            <person name="Larimer F."/>
            <person name="Land M."/>
            <person name="Hauser L."/>
            <person name="Kyrpides N."/>
            <person name="Mikhailova N."/>
            <person name="Richardson P."/>
        </authorList>
    </citation>
    <scope>NUCLEOTIDE SEQUENCE [LARGE SCALE GENOMIC DNA]</scope>
    <source>
        <strain>NCIMB 400</strain>
    </source>
</reference>
<evidence type="ECO:0000255" key="1">
    <source>
        <dbReference type="HAMAP-Rule" id="MF_00206"/>
    </source>
</evidence>
<evidence type="ECO:0000255" key="2">
    <source>
        <dbReference type="PROSITE-ProRule" id="PRU01266"/>
    </source>
</evidence>
<organism>
    <name type="scientific">Shewanella frigidimarina (strain NCIMB 400)</name>
    <dbReference type="NCBI Taxonomy" id="318167"/>
    <lineage>
        <taxon>Bacteria</taxon>
        <taxon>Pseudomonadati</taxon>
        <taxon>Pseudomonadota</taxon>
        <taxon>Gammaproteobacteria</taxon>
        <taxon>Alteromonadales</taxon>
        <taxon>Shewanellaceae</taxon>
        <taxon>Shewanella</taxon>
    </lineage>
</organism>
<name>LIPA_SHEFN</name>
<comment type="function">
    <text evidence="1">Catalyzes the radical-mediated insertion of two sulfur atoms into the C-6 and C-8 positions of the octanoyl moiety bound to the lipoyl domains of lipoate-dependent enzymes, thereby converting the octanoylated domains into lipoylated derivatives.</text>
</comment>
<comment type="catalytic activity">
    <reaction evidence="1">
        <text>[[Fe-S] cluster scaffold protein carrying a second [4Fe-4S](2+) cluster] + N(6)-octanoyl-L-lysyl-[protein] + 2 oxidized [2Fe-2S]-[ferredoxin] + 2 S-adenosyl-L-methionine + 4 H(+) = [[Fe-S] cluster scaffold protein] + N(6)-[(R)-dihydrolipoyl]-L-lysyl-[protein] + 4 Fe(3+) + 2 hydrogen sulfide + 2 5'-deoxyadenosine + 2 L-methionine + 2 reduced [2Fe-2S]-[ferredoxin]</text>
        <dbReference type="Rhea" id="RHEA:16585"/>
        <dbReference type="Rhea" id="RHEA-COMP:9928"/>
        <dbReference type="Rhea" id="RHEA-COMP:10000"/>
        <dbReference type="Rhea" id="RHEA-COMP:10001"/>
        <dbReference type="Rhea" id="RHEA-COMP:10475"/>
        <dbReference type="Rhea" id="RHEA-COMP:14568"/>
        <dbReference type="Rhea" id="RHEA-COMP:14569"/>
        <dbReference type="ChEBI" id="CHEBI:15378"/>
        <dbReference type="ChEBI" id="CHEBI:17319"/>
        <dbReference type="ChEBI" id="CHEBI:29034"/>
        <dbReference type="ChEBI" id="CHEBI:29919"/>
        <dbReference type="ChEBI" id="CHEBI:33722"/>
        <dbReference type="ChEBI" id="CHEBI:33737"/>
        <dbReference type="ChEBI" id="CHEBI:33738"/>
        <dbReference type="ChEBI" id="CHEBI:57844"/>
        <dbReference type="ChEBI" id="CHEBI:59789"/>
        <dbReference type="ChEBI" id="CHEBI:78809"/>
        <dbReference type="ChEBI" id="CHEBI:83100"/>
        <dbReference type="EC" id="2.8.1.8"/>
    </reaction>
</comment>
<comment type="cofactor">
    <cofactor evidence="1">
        <name>[4Fe-4S] cluster</name>
        <dbReference type="ChEBI" id="CHEBI:49883"/>
    </cofactor>
    <text evidence="1">Binds 2 [4Fe-4S] clusters per subunit. One cluster is coordinated with 3 cysteines and an exchangeable S-adenosyl-L-methionine.</text>
</comment>
<comment type="pathway">
    <text evidence="1">Protein modification; protein lipoylation via endogenous pathway; protein N(6)-(lipoyl)lysine from octanoyl-[acyl-carrier-protein]: step 2/2.</text>
</comment>
<comment type="subcellular location">
    <subcellularLocation>
        <location evidence="1">Cytoplasm</location>
    </subcellularLocation>
</comment>
<comment type="similarity">
    <text evidence="1">Belongs to the radical SAM superfamily. Lipoyl synthase family.</text>
</comment>
<keyword id="KW-0004">4Fe-4S</keyword>
<keyword id="KW-0963">Cytoplasm</keyword>
<keyword id="KW-0408">Iron</keyword>
<keyword id="KW-0411">Iron-sulfur</keyword>
<keyword id="KW-0479">Metal-binding</keyword>
<keyword id="KW-1185">Reference proteome</keyword>
<keyword id="KW-0949">S-adenosyl-L-methionine</keyword>
<keyword id="KW-0808">Transferase</keyword>
<accession>Q087L5</accession>
<sequence length="321" mass="36205">MNRPERLQPGVKLRDADKVARIPVKVVPSERETMLRKPDWLRVKLPSSNQRILEIKAALRKNGLHSVCEEASCPNLAECFNHGTATFMILGAICTRRCPFCDVAHGRPLKADADEPKKLAQTIKDMKLKYVVITSVDRDDLRDGGAQHFADCIREIRLLNPEIKIETLVPDFRGRIDAALDILATEPPDVFNHNLETAPAHYRKARPGANYQWSLDLLKRFKERHPTIPTKSGLMMGLGETNEEIAEVLRDLRAHNVEMLTLGQYLQPSKFHLPVERYVPPAEFDELKALADELGFTHAACGPLVRSSYHADLQAQGKEVK</sequence>
<gene>
    <name evidence="1" type="primary">lipA</name>
    <name type="ordered locus">Sfri_0692</name>
</gene>